<proteinExistence type="inferred from homology"/>
<keyword id="KW-1185">Reference proteome</keyword>
<keyword id="KW-0687">Ribonucleoprotein</keyword>
<keyword id="KW-0689">Ribosomal protein</keyword>
<keyword id="KW-0694">RNA-binding</keyword>
<keyword id="KW-0699">rRNA-binding</keyword>
<comment type="function">
    <text evidence="1">Binds the lower part of the 30S subunit head. Binds mRNA in the 70S ribosome, positioning it for translation.</text>
</comment>
<comment type="subunit">
    <text evidence="1">Part of the 30S ribosomal subunit. Forms a tight complex with proteins S10 and S14.</text>
</comment>
<comment type="similarity">
    <text evidence="1">Belongs to the universal ribosomal protein uS3 family.</text>
</comment>
<protein>
    <recommendedName>
        <fullName evidence="1">Small ribosomal subunit protein uS3</fullName>
    </recommendedName>
    <alternativeName>
        <fullName evidence="3">30S ribosomal protein S3</fullName>
    </alternativeName>
</protein>
<organism>
    <name type="scientific">Rippkaea orientalis (strain PCC 8801 / RF-1)</name>
    <name type="common">Cyanothece sp. (strain PCC 8801)</name>
    <dbReference type="NCBI Taxonomy" id="41431"/>
    <lineage>
        <taxon>Bacteria</taxon>
        <taxon>Bacillati</taxon>
        <taxon>Cyanobacteriota</taxon>
        <taxon>Cyanophyceae</taxon>
        <taxon>Oscillatoriophycideae</taxon>
        <taxon>Chroococcales</taxon>
        <taxon>Aphanothecaceae</taxon>
        <taxon>Rippkaea</taxon>
        <taxon>Rippkaea orientalis</taxon>
    </lineage>
</organism>
<name>RS3_RIPO1</name>
<sequence>MGQKIHPIGFRLGITADHKSCWYADSKRYPETLQEDRQIRQYITKNLSNAGISDIRIERKADQVDLAIHTARPGVVVGRGGSGIEQLRLGLQQDLGGNRQIRINVIEVQRVDADAMLIAEYITQQLERRVSFRRVVRQAIQRAQRAEVKGIKIQVSGRLNGAEIARTEWVREGRVPLHTLRADIDYAYRTAQTIYGILGVKVWVFKGEIIPGQEEIPMPVPSQTPRRQRRRQQFEDRSGEE</sequence>
<dbReference type="EMBL" id="CP001287">
    <property type="protein sequence ID" value="ACK64349.1"/>
    <property type="molecule type" value="Genomic_DNA"/>
</dbReference>
<dbReference type="RefSeq" id="WP_012593626.1">
    <property type="nucleotide sequence ID" value="NC_011726.1"/>
</dbReference>
<dbReference type="SMR" id="B7K329"/>
<dbReference type="STRING" id="41431.PCC8801_0246"/>
<dbReference type="KEGG" id="cyp:PCC8801_0246"/>
<dbReference type="eggNOG" id="COG0092">
    <property type="taxonomic scope" value="Bacteria"/>
</dbReference>
<dbReference type="HOGENOM" id="CLU_058591_0_2_3"/>
<dbReference type="OrthoDB" id="9806396at2"/>
<dbReference type="Proteomes" id="UP000008204">
    <property type="component" value="Chromosome"/>
</dbReference>
<dbReference type="GO" id="GO:0022627">
    <property type="term" value="C:cytosolic small ribosomal subunit"/>
    <property type="evidence" value="ECO:0007669"/>
    <property type="project" value="TreeGrafter"/>
</dbReference>
<dbReference type="GO" id="GO:0003729">
    <property type="term" value="F:mRNA binding"/>
    <property type="evidence" value="ECO:0007669"/>
    <property type="project" value="UniProtKB-UniRule"/>
</dbReference>
<dbReference type="GO" id="GO:0019843">
    <property type="term" value="F:rRNA binding"/>
    <property type="evidence" value="ECO:0007669"/>
    <property type="project" value="UniProtKB-UniRule"/>
</dbReference>
<dbReference type="GO" id="GO:0003735">
    <property type="term" value="F:structural constituent of ribosome"/>
    <property type="evidence" value="ECO:0007669"/>
    <property type="project" value="InterPro"/>
</dbReference>
<dbReference type="GO" id="GO:0006412">
    <property type="term" value="P:translation"/>
    <property type="evidence" value="ECO:0007669"/>
    <property type="project" value="UniProtKB-UniRule"/>
</dbReference>
<dbReference type="CDD" id="cd02412">
    <property type="entry name" value="KH-II_30S_S3"/>
    <property type="match status" value="1"/>
</dbReference>
<dbReference type="FunFam" id="3.30.300.20:FF:000001">
    <property type="entry name" value="30S ribosomal protein S3"/>
    <property type="match status" value="1"/>
</dbReference>
<dbReference type="Gene3D" id="3.30.300.20">
    <property type="match status" value="1"/>
</dbReference>
<dbReference type="Gene3D" id="3.30.1140.32">
    <property type="entry name" value="Ribosomal protein S3, C-terminal domain"/>
    <property type="match status" value="1"/>
</dbReference>
<dbReference type="HAMAP" id="MF_01309_B">
    <property type="entry name" value="Ribosomal_uS3_B"/>
    <property type="match status" value="1"/>
</dbReference>
<dbReference type="InterPro" id="IPR004087">
    <property type="entry name" value="KH_dom"/>
</dbReference>
<dbReference type="InterPro" id="IPR015946">
    <property type="entry name" value="KH_dom-like_a/b"/>
</dbReference>
<dbReference type="InterPro" id="IPR004044">
    <property type="entry name" value="KH_dom_type_2"/>
</dbReference>
<dbReference type="InterPro" id="IPR009019">
    <property type="entry name" value="KH_sf_prok-type"/>
</dbReference>
<dbReference type="InterPro" id="IPR036419">
    <property type="entry name" value="Ribosomal_S3_C_sf"/>
</dbReference>
<dbReference type="InterPro" id="IPR005704">
    <property type="entry name" value="Ribosomal_uS3_bac-typ"/>
</dbReference>
<dbReference type="InterPro" id="IPR001351">
    <property type="entry name" value="Ribosomal_uS3_C"/>
</dbReference>
<dbReference type="InterPro" id="IPR018280">
    <property type="entry name" value="Ribosomal_uS3_CS"/>
</dbReference>
<dbReference type="NCBIfam" id="TIGR01009">
    <property type="entry name" value="rpsC_bact"/>
    <property type="match status" value="1"/>
</dbReference>
<dbReference type="PANTHER" id="PTHR11760">
    <property type="entry name" value="30S/40S RIBOSOMAL PROTEIN S3"/>
    <property type="match status" value="1"/>
</dbReference>
<dbReference type="PANTHER" id="PTHR11760:SF19">
    <property type="entry name" value="SMALL RIBOSOMAL SUBUNIT PROTEIN US3C"/>
    <property type="match status" value="1"/>
</dbReference>
<dbReference type="Pfam" id="PF07650">
    <property type="entry name" value="KH_2"/>
    <property type="match status" value="1"/>
</dbReference>
<dbReference type="Pfam" id="PF00189">
    <property type="entry name" value="Ribosomal_S3_C"/>
    <property type="match status" value="1"/>
</dbReference>
<dbReference type="SMART" id="SM00322">
    <property type="entry name" value="KH"/>
    <property type="match status" value="1"/>
</dbReference>
<dbReference type="SUPFAM" id="SSF54814">
    <property type="entry name" value="Prokaryotic type KH domain (KH-domain type II)"/>
    <property type="match status" value="1"/>
</dbReference>
<dbReference type="SUPFAM" id="SSF54821">
    <property type="entry name" value="Ribosomal protein S3 C-terminal domain"/>
    <property type="match status" value="1"/>
</dbReference>
<dbReference type="PROSITE" id="PS50823">
    <property type="entry name" value="KH_TYPE_2"/>
    <property type="match status" value="1"/>
</dbReference>
<dbReference type="PROSITE" id="PS00548">
    <property type="entry name" value="RIBOSOMAL_S3"/>
    <property type="match status" value="1"/>
</dbReference>
<gene>
    <name evidence="1" type="primary">rpsC</name>
    <name evidence="1" type="synonym">rps3</name>
    <name type="ordered locus">PCC8801_0246</name>
</gene>
<feature type="chain" id="PRO_1000140953" description="Small ribosomal subunit protein uS3">
    <location>
        <begin position="1"/>
        <end position="241"/>
    </location>
</feature>
<feature type="domain" description="KH type-2" evidence="1">
    <location>
        <begin position="39"/>
        <end position="109"/>
    </location>
</feature>
<feature type="region of interest" description="Disordered" evidence="2">
    <location>
        <begin position="214"/>
        <end position="241"/>
    </location>
</feature>
<feature type="compositionally biased region" description="Basic and acidic residues" evidence="2">
    <location>
        <begin position="232"/>
        <end position="241"/>
    </location>
</feature>
<accession>B7K329</accession>
<evidence type="ECO:0000255" key="1">
    <source>
        <dbReference type="HAMAP-Rule" id="MF_01309"/>
    </source>
</evidence>
<evidence type="ECO:0000256" key="2">
    <source>
        <dbReference type="SAM" id="MobiDB-lite"/>
    </source>
</evidence>
<evidence type="ECO:0000305" key="3"/>
<reference key="1">
    <citation type="journal article" date="2011" name="MBio">
        <title>Novel metabolic attributes of the genus Cyanothece, comprising a group of unicellular nitrogen-fixing Cyanobacteria.</title>
        <authorList>
            <person name="Bandyopadhyay A."/>
            <person name="Elvitigala T."/>
            <person name="Welsh E."/>
            <person name="Stockel J."/>
            <person name="Liberton M."/>
            <person name="Min H."/>
            <person name="Sherman L.A."/>
            <person name="Pakrasi H.B."/>
        </authorList>
    </citation>
    <scope>NUCLEOTIDE SEQUENCE [LARGE SCALE GENOMIC DNA]</scope>
    <source>
        <strain>PCC 8801 / RF-1</strain>
    </source>
</reference>